<comment type="function">
    <text evidence="1">Catalyzes the deacetylation of 1D-myo-inositol 2-acetamido-2-deoxy-alpha-D-glucopyranoside (GlcNAc-Ins) in the mycothiol biosynthesis pathway.</text>
</comment>
<comment type="catalytic activity">
    <reaction evidence="1">
        <text>1D-myo-inositol 2-acetamido-2-deoxy-alpha-D-glucopyranoside + H2O = 1D-myo-inositol 2-amino-2-deoxy-alpha-D-glucopyranoside + acetate</text>
        <dbReference type="Rhea" id="RHEA:26180"/>
        <dbReference type="ChEBI" id="CHEBI:15377"/>
        <dbReference type="ChEBI" id="CHEBI:30089"/>
        <dbReference type="ChEBI" id="CHEBI:52442"/>
        <dbReference type="ChEBI" id="CHEBI:58886"/>
        <dbReference type="EC" id="3.5.1.103"/>
    </reaction>
</comment>
<comment type="cofactor">
    <cofactor evidence="1">
        <name>Zn(2+)</name>
        <dbReference type="ChEBI" id="CHEBI:29105"/>
    </cofactor>
    <text evidence="1">Binds 1 zinc ion per subunit.</text>
</comment>
<comment type="similarity">
    <text evidence="1">Belongs to the MshB deacetylase family.</text>
</comment>
<organism>
    <name type="scientific">Catenulispora acidiphila (strain DSM 44928 / JCM 14897 / NBRC 102108 / NRRL B-24433 / ID139908)</name>
    <dbReference type="NCBI Taxonomy" id="479433"/>
    <lineage>
        <taxon>Bacteria</taxon>
        <taxon>Bacillati</taxon>
        <taxon>Actinomycetota</taxon>
        <taxon>Actinomycetes</taxon>
        <taxon>Catenulisporales</taxon>
        <taxon>Catenulisporaceae</taxon>
        <taxon>Catenulispora</taxon>
    </lineage>
</organism>
<dbReference type="EC" id="3.5.1.103" evidence="1"/>
<dbReference type="EMBL" id="CP001700">
    <property type="protein sequence ID" value="ACU73923.1"/>
    <property type="molecule type" value="Genomic_DNA"/>
</dbReference>
<dbReference type="RefSeq" id="WP_015793652.1">
    <property type="nucleotide sequence ID" value="NC_013131.1"/>
</dbReference>
<dbReference type="SMR" id="C7Q4X5"/>
<dbReference type="STRING" id="479433.Caci_5063"/>
<dbReference type="KEGG" id="cai:Caci_5063"/>
<dbReference type="eggNOG" id="COG2120">
    <property type="taxonomic scope" value="Bacteria"/>
</dbReference>
<dbReference type="HOGENOM" id="CLU_049311_2_1_11"/>
<dbReference type="InParanoid" id="C7Q4X5"/>
<dbReference type="OrthoDB" id="158614at2"/>
<dbReference type="Proteomes" id="UP000000851">
    <property type="component" value="Chromosome"/>
</dbReference>
<dbReference type="GO" id="GO:0035595">
    <property type="term" value="F:N-acetylglucosaminylinositol deacetylase activity"/>
    <property type="evidence" value="ECO:0007669"/>
    <property type="project" value="UniProtKB-EC"/>
</dbReference>
<dbReference type="GO" id="GO:0008270">
    <property type="term" value="F:zinc ion binding"/>
    <property type="evidence" value="ECO:0007669"/>
    <property type="project" value="UniProtKB-UniRule"/>
</dbReference>
<dbReference type="GO" id="GO:0010125">
    <property type="term" value="P:mycothiol biosynthetic process"/>
    <property type="evidence" value="ECO:0007669"/>
    <property type="project" value="UniProtKB-UniRule"/>
</dbReference>
<dbReference type="Gene3D" id="3.40.50.10320">
    <property type="entry name" value="LmbE-like"/>
    <property type="match status" value="1"/>
</dbReference>
<dbReference type="HAMAP" id="MF_01696">
    <property type="entry name" value="MshB"/>
    <property type="match status" value="1"/>
</dbReference>
<dbReference type="InterPro" id="IPR003737">
    <property type="entry name" value="GlcNAc_PI_deacetylase-related"/>
</dbReference>
<dbReference type="InterPro" id="IPR024078">
    <property type="entry name" value="LmbE-like_dom_sf"/>
</dbReference>
<dbReference type="InterPro" id="IPR017810">
    <property type="entry name" value="Mycothiol_biosynthesis_MshB"/>
</dbReference>
<dbReference type="NCBIfam" id="TIGR03445">
    <property type="entry name" value="mycothiol_MshB"/>
    <property type="match status" value="1"/>
</dbReference>
<dbReference type="PANTHER" id="PTHR12993:SF26">
    <property type="entry name" value="1D-MYO-INOSITOL 2-ACETAMIDO-2-DEOXY-ALPHA-D-GLUCOPYRANOSIDE DEACETYLASE"/>
    <property type="match status" value="1"/>
</dbReference>
<dbReference type="PANTHER" id="PTHR12993">
    <property type="entry name" value="N-ACETYLGLUCOSAMINYL-PHOSPHATIDYLINOSITOL DE-N-ACETYLASE-RELATED"/>
    <property type="match status" value="1"/>
</dbReference>
<dbReference type="Pfam" id="PF02585">
    <property type="entry name" value="PIG-L"/>
    <property type="match status" value="1"/>
</dbReference>
<dbReference type="SUPFAM" id="SSF102588">
    <property type="entry name" value="LmbE-like"/>
    <property type="match status" value="1"/>
</dbReference>
<evidence type="ECO:0000255" key="1">
    <source>
        <dbReference type="HAMAP-Rule" id="MF_01696"/>
    </source>
</evidence>
<proteinExistence type="inferred from homology"/>
<protein>
    <recommendedName>
        <fullName evidence="1">1D-myo-inositol 2-acetamido-2-deoxy-alpha-D-glucopyranoside deacetylase 2</fullName>
        <shortName evidence="1">GlcNAc-Ins deacetylase 2</shortName>
        <ecNumber evidence="1">3.5.1.103</ecNumber>
    </recommendedName>
    <alternativeName>
        <fullName>N-acetyl-1-D-myo-inositol 2-amino-2-deoxy-alpha-D-glucopyranoside deacetylase 2</fullName>
    </alternativeName>
</protein>
<reference key="1">
    <citation type="journal article" date="2009" name="Stand. Genomic Sci.">
        <title>Complete genome sequence of Catenulispora acidiphila type strain (ID 139908).</title>
        <authorList>
            <person name="Copeland A."/>
            <person name="Lapidus A."/>
            <person name="Glavina Del Rio T."/>
            <person name="Nolan M."/>
            <person name="Lucas S."/>
            <person name="Chen F."/>
            <person name="Tice H."/>
            <person name="Cheng J.F."/>
            <person name="Bruce D."/>
            <person name="Goodwin L."/>
            <person name="Pitluck S."/>
            <person name="Mikhailova N."/>
            <person name="Pati A."/>
            <person name="Ivanova N."/>
            <person name="Mavromatis K."/>
            <person name="Chen A."/>
            <person name="Palaniappan K."/>
            <person name="Chain P."/>
            <person name="Land M."/>
            <person name="Hauser L."/>
            <person name="Chang Y.J."/>
            <person name="Jeffries C.D."/>
            <person name="Chertkov O."/>
            <person name="Brettin T."/>
            <person name="Detter J.C."/>
            <person name="Han C."/>
            <person name="Ali Z."/>
            <person name="Tindall B.J."/>
            <person name="Goker M."/>
            <person name="Bristow J."/>
            <person name="Eisen J.A."/>
            <person name="Markowitz V."/>
            <person name="Hugenholtz P."/>
            <person name="Kyrpides N.C."/>
            <person name="Klenk H.P."/>
        </authorList>
    </citation>
    <scope>NUCLEOTIDE SEQUENCE [LARGE SCALE GENOMIC DNA]</scope>
    <source>
        <strain>DSM 44928 / JCM 14897 / NBRC 102108 / NRRL B-24433 / ID139908</strain>
    </source>
</reference>
<feature type="chain" id="PRO_0000400174" description="1D-myo-inositol 2-acetamido-2-deoxy-alpha-D-glucopyranoside deacetylase 2">
    <location>
        <begin position="1"/>
        <end position="304"/>
    </location>
</feature>
<feature type="binding site" evidence="1">
    <location>
        <position position="17"/>
    </location>
    <ligand>
        <name>Zn(2+)</name>
        <dbReference type="ChEBI" id="CHEBI:29105"/>
    </ligand>
</feature>
<feature type="binding site" evidence="1">
    <location>
        <position position="20"/>
    </location>
    <ligand>
        <name>Zn(2+)</name>
        <dbReference type="ChEBI" id="CHEBI:29105"/>
    </ligand>
</feature>
<feature type="binding site" evidence="1">
    <location>
        <position position="152"/>
    </location>
    <ligand>
        <name>Zn(2+)</name>
        <dbReference type="ChEBI" id="CHEBI:29105"/>
    </ligand>
</feature>
<name>MSHB2_CATAD</name>
<keyword id="KW-0378">Hydrolase</keyword>
<keyword id="KW-0479">Metal-binding</keyword>
<keyword id="KW-1185">Reference proteome</keyword>
<keyword id="KW-0862">Zinc</keyword>
<sequence length="304" mass="32785">MADSGSEPRSLLLVHAHPDDESIDNGATMARYAAAGVNVTLVTCTLGEEGDVVVPELAHLGAAYEDRLADHRAGELDAAMAALGVTDHRILNEQNRYRDSGMMGSPSNDHPRSFWRADVEEAARSLAHIIRELRPQVLVTYGPDGGYGHPDHIQAHRVAMRAAQLAGQAGQADASQNARLPHAVAKIYWNCHPRSAARFSTKALRAEEQTPFLLDESAISVTDDSFATCVIDASDHLAAKSAALSAHRTQMTVQGAFFALSNNVGRLISGEEYYHLAYCRPDLAVDEPEDHAAPDLESDLFAGL</sequence>
<accession>C7Q4X5</accession>
<gene>
    <name evidence="1" type="primary">mshB2</name>
    <name type="ordered locus">Caci_5063</name>
</gene>